<name>AEBP2_BOVIN</name>
<comment type="function">
    <text evidence="2">Acts as an accessory subunit for the core Polycomb repressive complex 2 (PRC2), which mediates histone H3K27 (H3K27me3) trimethylation on chromatin leading to transcriptional repression of the affected target gene. Plays a role in nucleosome localization of the PRC2 complex.</text>
</comment>
<comment type="subunit">
    <text evidence="2">Self-associates. Associates with the PRC2 complex, which consists of the core components EED, EZH1 or EZH2, SUZ12, and RBBP4, and various combinations of accessory subunits including AEBP2, JARID2, PHF19, MTF2 and EPOP. Found in a monomeric PRC2.2 (class 2) complex consisting of at least SUZ12, RBBP4, AEBP2 and JARID2. Within the PRC2 complex, interacts directly with SUZ12; competes with PHF19 for SUZ12 binding. Interacts with EED, EZH2, and RBBP4. May also interact with RBBP7.</text>
</comment>
<comment type="subcellular location">
    <subcellularLocation>
        <location evidence="2">Nucleus</location>
    </subcellularLocation>
    <text evidence="2">Localizes to chromatin as part of the PRC2 complex.</text>
</comment>
<comment type="similarity">
    <text evidence="5">Belongs to the AEBP2/jing C2H2-type zinc-finger family.</text>
</comment>
<comment type="sequence caution" evidence="5">
    <conflict type="erroneous initiation">
        <sequence resource="EMBL-CDS" id="AAI23768"/>
    </conflict>
</comment>
<reference key="1">
    <citation type="journal article" date="2009" name="Science">
        <title>The genome sequence of taurine cattle: a window to ruminant biology and evolution.</title>
        <authorList>
            <consortium name="The bovine genome sequencing and analysis consortium"/>
        </authorList>
    </citation>
    <scope>NUCLEOTIDE SEQUENCE [LARGE SCALE GENOMIC DNA]</scope>
    <source>
        <strain>Hereford</strain>
    </source>
</reference>
<reference key="2">
    <citation type="submission" date="2006-09" db="EMBL/GenBank/DDBJ databases">
        <authorList>
            <consortium name="NIH - Mammalian Gene Collection (MGC) project"/>
        </authorList>
    </citation>
    <scope>NUCLEOTIDE SEQUENCE [LARGE SCALE MRNA] OF 99-511</scope>
    <source>
        <strain>Hereford</strain>
        <tissue>Hippocampus</tissue>
    </source>
</reference>
<proteinExistence type="evidence at transcript level"/>
<evidence type="ECO:0000250" key="1"/>
<evidence type="ECO:0000250" key="2">
    <source>
        <dbReference type="UniProtKB" id="Q6ZN18"/>
    </source>
</evidence>
<evidence type="ECO:0000255" key="3">
    <source>
        <dbReference type="PROSITE-ProRule" id="PRU00042"/>
    </source>
</evidence>
<evidence type="ECO:0000256" key="4">
    <source>
        <dbReference type="SAM" id="MobiDB-lite"/>
    </source>
</evidence>
<evidence type="ECO:0000305" key="5"/>
<feature type="initiator methionine" description="Removed" evidence="2">
    <location>
        <position position="1"/>
    </location>
</feature>
<feature type="chain" id="PRO_0000341589" description="Zinc finger protein AEBP2">
    <location>
        <begin position="2"/>
        <end position="511"/>
    </location>
</feature>
<feature type="zinc finger region" description="C2H2-type 1" evidence="3">
    <location>
        <begin position="255"/>
        <end position="280"/>
    </location>
</feature>
<feature type="zinc finger region" description="C2H2-type 2; degenerate" evidence="3">
    <location>
        <begin position="294"/>
        <end position="316"/>
    </location>
</feature>
<feature type="zinc finger region" description="C2H2-type 3" evidence="3">
    <location>
        <begin position="322"/>
        <end position="346"/>
    </location>
</feature>
<feature type="region of interest" description="Disordered" evidence="4">
    <location>
        <begin position="1"/>
        <end position="223"/>
    </location>
</feature>
<feature type="region of interest" description="Interaction with RBBP4" evidence="1">
    <location>
        <begin position="203"/>
        <end position="288"/>
    </location>
</feature>
<feature type="region of interest" description="Disordered" evidence="4">
    <location>
        <begin position="346"/>
        <end position="388"/>
    </location>
</feature>
<feature type="region of interest" description="Interaction with SUZ12" evidence="2">
    <location>
        <begin position="401"/>
        <end position="472"/>
    </location>
</feature>
<feature type="region of interest" description="Important for nucleosome binding activity of the PRC2 complex" evidence="2">
    <location>
        <begin position="489"/>
        <end position="511"/>
    </location>
</feature>
<feature type="compositionally biased region" description="Acidic residues" evidence="4">
    <location>
        <begin position="36"/>
        <end position="50"/>
    </location>
</feature>
<feature type="compositionally biased region" description="Gly residues" evidence="4">
    <location>
        <begin position="59"/>
        <end position="71"/>
    </location>
</feature>
<feature type="compositionally biased region" description="Acidic residues" evidence="4">
    <location>
        <begin position="87"/>
        <end position="114"/>
    </location>
</feature>
<feature type="compositionally biased region" description="Low complexity" evidence="4">
    <location>
        <begin position="115"/>
        <end position="144"/>
    </location>
</feature>
<feature type="compositionally biased region" description="Basic and acidic residues" evidence="4">
    <location>
        <begin position="146"/>
        <end position="157"/>
    </location>
</feature>
<feature type="compositionally biased region" description="Gly residues" evidence="4">
    <location>
        <begin position="160"/>
        <end position="169"/>
    </location>
</feature>
<feature type="compositionally biased region" description="Gly residues" evidence="4">
    <location>
        <begin position="179"/>
        <end position="190"/>
    </location>
</feature>
<feature type="compositionally biased region" description="Polar residues" evidence="4">
    <location>
        <begin position="346"/>
        <end position="359"/>
    </location>
</feature>
<feature type="compositionally biased region" description="Basic residues" evidence="4">
    <location>
        <begin position="371"/>
        <end position="386"/>
    </location>
</feature>
<feature type="modified residue" description="N-acetylalanine" evidence="2">
    <location>
        <position position="2"/>
    </location>
</feature>
<feature type="modified residue" description="Phosphoserine" evidence="2">
    <location>
        <position position="18"/>
    </location>
</feature>
<feature type="modified residue" description="Phosphoserine" evidence="2">
    <location>
        <position position="24"/>
    </location>
</feature>
<feature type="modified residue" description="Phosphoserine" evidence="2">
    <location>
        <position position="135"/>
    </location>
</feature>
<feature type="modified residue" description="Phosphoserine" evidence="2">
    <location>
        <position position="200"/>
    </location>
</feature>
<feature type="modified residue" description="Phosphoserine" evidence="2">
    <location>
        <position position="204"/>
    </location>
</feature>
<feature type="modified residue" description="Phosphoserine" evidence="2">
    <location>
        <position position="205"/>
    </location>
</feature>
<feature type="modified residue" description="Phosphoserine" evidence="2">
    <location>
        <position position="384"/>
    </location>
</feature>
<protein>
    <recommendedName>
        <fullName>Zinc finger protein AEBP2</fullName>
    </recommendedName>
    <alternativeName>
        <fullName>Adipocyte enhancer-binding protein 2</fullName>
        <shortName>AE-binding protein 2</shortName>
    </alternativeName>
</protein>
<keyword id="KW-0007">Acetylation</keyword>
<keyword id="KW-0156">Chromatin regulator</keyword>
<keyword id="KW-0238">DNA-binding</keyword>
<keyword id="KW-0479">Metal-binding</keyword>
<keyword id="KW-0539">Nucleus</keyword>
<keyword id="KW-0597">Phosphoprotein</keyword>
<keyword id="KW-1185">Reference proteome</keyword>
<keyword id="KW-0677">Repeat</keyword>
<keyword id="KW-0678">Repressor</keyword>
<keyword id="KW-0804">Transcription</keyword>
<keyword id="KW-0805">Transcription regulation</keyword>
<keyword id="KW-0862">Zinc</keyword>
<keyword id="KW-0863">Zinc-finger</keyword>
<organism>
    <name type="scientific">Bos taurus</name>
    <name type="common">Bovine</name>
    <dbReference type="NCBI Taxonomy" id="9913"/>
    <lineage>
        <taxon>Eukaryota</taxon>
        <taxon>Metazoa</taxon>
        <taxon>Chordata</taxon>
        <taxon>Craniata</taxon>
        <taxon>Vertebrata</taxon>
        <taxon>Euteleostomi</taxon>
        <taxon>Mammalia</taxon>
        <taxon>Eutheria</taxon>
        <taxon>Laurasiatheria</taxon>
        <taxon>Artiodactyla</taxon>
        <taxon>Ruminantia</taxon>
        <taxon>Pecora</taxon>
        <taxon>Bovidae</taxon>
        <taxon>Bovinae</taxon>
        <taxon>Bos</taxon>
    </lineage>
</organism>
<accession>A4FV57</accession>
<sequence length="511" mass="54049">MAAALTDMADLEELSRLSPLPPGSPGPAARGRAEPPEEEEEEDEEEEAEAEAVAALLLNGGGGGGGVGGGEAETMSEPSPESASQAGEDDDEEEDDDEEEEDESSSGGGEEESSAESLVGSSSGGSSSDETRSLSPGAASSSSGDGDGKEGLEEPKGPRGSQGGGGGGSSSSSVVSSGGDEGYGTGGGGSSATSGGRRGSLEMSSDGEPLSRMDSEDSISSTIMDVDSTISSGRSTPAMMNGQGSTTSSSKNIAYNCCWDQCQACFTSSPDLADHIRSIHVDGQRGGVFVCLWKGCKVYNTPSTSQSWLQRHMLTHSGDKPFKCVVGGCNASFASQGGLARHVPTHFSQQNSSKVSSQPKAKEESPSKAGMNKRRKLKNKRRRSLPRPHDFFDAQTLDAIRHRAICFNLSAHIESLGKGHSVVFHSTVIAKRKEDSGKIKLLLHWMPEDILPDVWVNESERHQLKTKVVHLSKLPKDTALLLDPNIYRTMPQKRLKRTLIRKVFNLYLSKQ</sequence>
<gene>
    <name type="primary">AEBP2</name>
</gene>
<dbReference type="EMBL" id="AAFC03004480">
    <property type="status" value="NOT_ANNOTATED_CDS"/>
    <property type="molecule type" value="Genomic_DNA"/>
</dbReference>
<dbReference type="EMBL" id="AAFC03026658">
    <property type="status" value="NOT_ANNOTATED_CDS"/>
    <property type="molecule type" value="Genomic_DNA"/>
</dbReference>
<dbReference type="EMBL" id="BC123767">
    <property type="protein sequence ID" value="AAI23768.1"/>
    <property type="status" value="ALT_INIT"/>
    <property type="molecule type" value="mRNA"/>
</dbReference>
<dbReference type="RefSeq" id="NP_001076954.2">
    <property type="nucleotide sequence ID" value="NM_001083485.3"/>
</dbReference>
<dbReference type="SMR" id="A4FV57"/>
<dbReference type="FunCoup" id="A4FV57">
    <property type="interactions" value="1707"/>
</dbReference>
<dbReference type="STRING" id="9913.ENSBTAP00000034344"/>
<dbReference type="PaxDb" id="9913-ENSBTAP00000034344"/>
<dbReference type="Ensembl" id="ENSBTAT00000034452.6">
    <property type="protein sequence ID" value="ENSBTAP00000034344.4"/>
    <property type="gene ID" value="ENSBTAG00000010818.7"/>
</dbReference>
<dbReference type="GeneID" id="537791"/>
<dbReference type="KEGG" id="bta:537791"/>
<dbReference type="CTD" id="121536"/>
<dbReference type="VEuPathDB" id="HostDB:ENSBTAG00000010818"/>
<dbReference type="VGNC" id="VGNC:25704">
    <property type="gene designation" value="AEBP2"/>
</dbReference>
<dbReference type="eggNOG" id="KOG1721">
    <property type="taxonomic scope" value="Eukaryota"/>
</dbReference>
<dbReference type="GeneTree" id="ENSGT00510000048519"/>
<dbReference type="HOGENOM" id="CLU_029789_1_0_1"/>
<dbReference type="InParanoid" id="A4FV57"/>
<dbReference type="OMA" id="FAENICL"/>
<dbReference type="OrthoDB" id="9984614at2759"/>
<dbReference type="TreeFam" id="TF328864"/>
<dbReference type="Reactome" id="R-BTA-212300">
    <property type="pathway name" value="PRC2 methylates histones and DNA"/>
</dbReference>
<dbReference type="Reactome" id="R-BTA-3214841">
    <property type="pathway name" value="PKMTs methylate histone lysines"/>
</dbReference>
<dbReference type="Proteomes" id="UP000009136">
    <property type="component" value="Chromosome 5"/>
</dbReference>
<dbReference type="Bgee" id="ENSBTAG00000010818">
    <property type="expression patterns" value="Expressed in rumen epithelium and 105 other cell types or tissues"/>
</dbReference>
<dbReference type="GO" id="GO:0035098">
    <property type="term" value="C:ESC/E(Z) complex"/>
    <property type="evidence" value="ECO:0000250"/>
    <property type="project" value="UniProtKB"/>
</dbReference>
<dbReference type="GO" id="GO:0003677">
    <property type="term" value="F:DNA binding"/>
    <property type="evidence" value="ECO:0007669"/>
    <property type="project" value="UniProtKB-KW"/>
</dbReference>
<dbReference type="GO" id="GO:0003712">
    <property type="term" value="F:transcription coregulator activity"/>
    <property type="evidence" value="ECO:0007669"/>
    <property type="project" value="Ensembl"/>
</dbReference>
<dbReference type="GO" id="GO:0008270">
    <property type="term" value="F:zinc ion binding"/>
    <property type="evidence" value="ECO:0007669"/>
    <property type="project" value="UniProtKB-KW"/>
</dbReference>
<dbReference type="GO" id="GO:0006325">
    <property type="term" value="P:chromatin organization"/>
    <property type="evidence" value="ECO:0007669"/>
    <property type="project" value="UniProtKB-KW"/>
</dbReference>
<dbReference type="GO" id="GO:0000122">
    <property type="term" value="P:negative regulation of transcription by RNA polymerase II"/>
    <property type="evidence" value="ECO:0007669"/>
    <property type="project" value="Ensembl"/>
</dbReference>
<dbReference type="GO" id="GO:0006357">
    <property type="term" value="P:regulation of transcription by RNA polymerase II"/>
    <property type="evidence" value="ECO:0000318"/>
    <property type="project" value="GO_Central"/>
</dbReference>
<dbReference type="FunFam" id="3.30.160.60:FF:000471">
    <property type="entry name" value="Zinc finger protein AEBP2"/>
    <property type="match status" value="1"/>
</dbReference>
<dbReference type="FunFam" id="3.30.160.60:FF:000323">
    <property type="entry name" value="zinc finger protein AEBP2"/>
    <property type="match status" value="1"/>
</dbReference>
<dbReference type="Gene3D" id="3.30.160.60">
    <property type="entry name" value="Classic Zinc Finger"/>
    <property type="match status" value="2"/>
</dbReference>
<dbReference type="InterPro" id="IPR052130">
    <property type="entry name" value="AEBP2/jing_C2H2-ZnF"/>
</dbReference>
<dbReference type="InterPro" id="IPR036236">
    <property type="entry name" value="Znf_C2H2_sf"/>
</dbReference>
<dbReference type="InterPro" id="IPR013087">
    <property type="entry name" value="Znf_C2H2_type"/>
</dbReference>
<dbReference type="PANTHER" id="PTHR46541">
    <property type="entry name" value="ZINC FINGER PROTEIN AEBP2"/>
    <property type="match status" value="1"/>
</dbReference>
<dbReference type="PANTHER" id="PTHR46541:SF1">
    <property type="entry name" value="ZINC FINGER PROTEIN AEBP2"/>
    <property type="match status" value="1"/>
</dbReference>
<dbReference type="SMART" id="SM00355">
    <property type="entry name" value="ZnF_C2H2"/>
    <property type="match status" value="3"/>
</dbReference>
<dbReference type="SUPFAM" id="SSF57667">
    <property type="entry name" value="beta-beta-alpha zinc fingers"/>
    <property type="match status" value="2"/>
</dbReference>
<dbReference type="PROSITE" id="PS00028">
    <property type="entry name" value="ZINC_FINGER_C2H2_1"/>
    <property type="match status" value="2"/>
</dbReference>
<dbReference type="PROSITE" id="PS50157">
    <property type="entry name" value="ZINC_FINGER_C2H2_2"/>
    <property type="match status" value="2"/>
</dbReference>